<gene>
    <name type="primary">nog-2</name>
    <name type="ORF">NCU02546</name>
</gene>
<sequence length="619" mass="69144">MGTGKKEKSRIQRQGKVTGDPKVKGENFYRSAKKIKALNVLKEGKAIRNKEGKVVKAASYQSRDVPTAVIEPNRRWFNNTRVISQDTLTSFREAIAEKDKDPYSVLLKSNKLPMSLIRDGPKDALKKHQAKMTIESEPFSQTFGPKAQRKRPKLSFNTIGDLTEHSEKSMDTYQARLEEIKLLSGASGYGGGLADDDVQEEDFSVATAKEAIFTKGQSKRIWNELYKVIDSSDVILHVIDARDPLGTRCRHVEKYLATEAPHKHLIFVLNKIDLVPSKTAAAWIRVLQKDHPTCAMRSSIKNPFGRGSLIDLLRQFSILHKDRKQISVGLVGYPNVGKSSIINALRGKPVAKVAPIPGETKVWQYVTLMRRIYLIDCPGIVPPNQNDTPQDLLLRGVVRVENVDNPEQYIPAVLNKVKPHHMERTYELKGWKDHIHFLEMLARKGGRLLKGGEPDVDGVAKMVLNDFMRGKIPWFTPAPEKEEGETDTMEGREGRYGEMSKKRKRDEDDSAPATTPASAGEDAKEEDPENFAGFDSDSDSEVEEAAEEKGEEKSTAEDMIPLDASSDEEEDGEEEGSDVEDDEEGSDLDIEGASELEESESEAEAAPAPPPKKQRRSRK</sequence>
<keyword id="KW-0342">GTP-binding</keyword>
<keyword id="KW-0547">Nucleotide-binding</keyword>
<keyword id="KW-0539">Nucleus</keyword>
<keyword id="KW-1185">Reference proteome</keyword>
<keyword id="KW-0690">Ribosome biogenesis</keyword>
<dbReference type="EMBL" id="CM002236">
    <property type="protein sequence ID" value="EAA36441.1"/>
    <property type="molecule type" value="Genomic_DNA"/>
</dbReference>
<dbReference type="RefSeq" id="XP_965677.1">
    <property type="nucleotide sequence ID" value="XM_960584.2"/>
</dbReference>
<dbReference type="SMR" id="Q7SHR8"/>
<dbReference type="FunCoup" id="Q7SHR8">
    <property type="interactions" value="810"/>
</dbReference>
<dbReference type="STRING" id="367110.Q7SHR8"/>
<dbReference type="PaxDb" id="5141-EFNCRP00000002015"/>
<dbReference type="EnsemblFungi" id="EAA36441">
    <property type="protein sequence ID" value="EAA36441"/>
    <property type="gene ID" value="NCU02546"/>
</dbReference>
<dbReference type="GeneID" id="3881827"/>
<dbReference type="KEGG" id="ncr:NCU02546"/>
<dbReference type="VEuPathDB" id="FungiDB:NCU02546"/>
<dbReference type="HOGENOM" id="CLU_011106_4_0_1"/>
<dbReference type="InParanoid" id="Q7SHR8"/>
<dbReference type="OrthoDB" id="444945at2759"/>
<dbReference type="Proteomes" id="UP000001805">
    <property type="component" value="Chromosome 1, Linkage Group I"/>
</dbReference>
<dbReference type="GO" id="GO:0005730">
    <property type="term" value="C:nucleolus"/>
    <property type="evidence" value="ECO:0000318"/>
    <property type="project" value="GO_Central"/>
</dbReference>
<dbReference type="GO" id="GO:0005525">
    <property type="term" value="F:GTP binding"/>
    <property type="evidence" value="ECO:0007669"/>
    <property type="project" value="UniProtKB-KW"/>
</dbReference>
<dbReference type="GO" id="GO:0042254">
    <property type="term" value="P:ribosome biogenesis"/>
    <property type="evidence" value="ECO:0007669"/>
    <property type="project" value="UniProtKB-KW"/>
</dbReference>
<dbReference type="CDD" id="cd01858">
    <property type="entry name" value="NGP_1"/>
    <property type="match status" value="1"/>
</dbReference>
<dbReference type="FunFam" id="3.40.50.300:FF:000559">
    <property type="entry name" value="Nuclear/nucleolar GTPase 2"/>
    <property type="match status" value="1"/>
</dbReference>
<dbReference type="FunFam" id="1.10.1580.10:FF:000005">
    <property type="entry name" value="Nucleolar GTP-binding protein 2"/>
    <property type="match status" value="1"/>
</dbReference>
<dbReference type="Gene3D" id="1.10.1580.10">
    <property type="match status" value="1"/>
</dbReference>
<dbReference type="Gene3D" id="3.40.50.300">
    <property type="entry name" value="P-loop containing nucleotide triphosphate hydrolases"/>
    <property type="match status" value="1"/>
</dbReference>
<dbReference type="InterPro" id="IPR030378">
    <property type="entry name" value="G_CP_dom"/>
</dbReference>
<dbReference type="InterPro" id="IPR024929">
    <property type="entry name" value="GNL2_CP_dom"/>
</dbReference>
<dbReference type="InterPro" id="IPR006073">
    <property type="entry name" value="GTP-bd"/>
</dbReference>
<dbReference type="InterPro" id="IPR023179">
    <property type="entry name" value="GTP-bd_ortho_bundle_sf"/>
</dbReference>
<dbReference type="InterPro" id="IPR012971">
    <property type="entry name" value="NOG2_N_dom"/>
</dbReference>
<dbReference type="InterPro" id="IPR027417">
    <property type="entry name" value="P-loop_NTPase"/>
</dbReference>
<dbReference type="InterPro" id="IPR050755">
    <property type="entry name" value="TRAFAC_YlqF/YawG_RiboMat"/>
</dbReference>
<dbReference type="PANTHER" id="PTHR11089">
    <property type="entry name" value="GTP-BINDING PROTEIN-RELATED"/>
    <property type="match status" value="1"/>
</dbReference>
<dbReference type="PANTHER" id="PTHR11089:SF9">
    <property type="entry name" value="NUCLEOLAR GTP-BINDING PROTEIN 2"/>
    <property type="match status" value="1"/>
</dbReference>
<dbReference type="Pfam" id="PF01926">
    <property type="entry name" value="MMR_HSR1"/>
    <property type="match status" value="1"/>
</dbReference>
<dbReference type="Pfam" id="PF08153">
    <property type="entry name" value="NGP1NT"/>
    <property type="match status" value="1"/>
</dbReference>
<dbReference type="PRINTS" id="PR00326">
    <property type="entry name" value="GTP1OBG"/>
</dbReference>
<dbReference type="SUPFAM" id="SSF52540">
    <property type="entry name" value="P-loop containing nucleoside triphosphate hydrolases"/>
    <property type="match status" value="1"/>
</dbReference>
<dbReference type="PROSITE" id="PS51721">
    <property type="entry name" value="G_CP"/>
    <property type="match status" value="1"/>
</dbReference>
<organism>
    <name type="scientific">Neurospora crassa (strain ATCC 24698 / 74-OR23-1A / CBS 708.71 / DSM 1257 / FGSC 987)</name>
    <dbReference type="NCBI Taxonomy" id="367110"/>
    <lineage>
        <taxon>Eukaryota</taxon>
        <taxon>Fungi</taxon>
        <taxon>Dikarya</taxon>
        <taxon>Ascomycota</taxon>
        <taxon>Pezizomycotina</taxon>
        <taxon>Sordariomycetes</taxon>
        <taxon>Sordariomycetidae</taxon>
        <taxon>Sordariales</taxon>
        <taxon>Sordariaceae</taxon>
        <taxon>Neurospora</taxon>
    </lineage>
</organism>
<reference key="1">
    <citation type="journal article" date="2003" name="Nature">
        <title>The genome sequence of the filamentous fungus Neurospora crassa.</title>
        <authorList>
            <person name="Galagan J.E."/>
            <person name="Calvo S.E."/>
            <person name="Borkovich K.A."/>
            <person name="Selker E.U."/>
            <person name="Read N.D."/>
            <person name="Jaffe D.B."/>
            <person name="FitzHugh W."/>
            <person name="Ma L.-J."/>
            <person name="Smirnov S."/>
            <person name="Purcell S."/>
            <person name="Rehman B."/>
            <person name="Elkins T."/>
            <person name="Engels R."/>
            <person name="Wang S."/>
            <person name="Nielsen C.B."/>
            <person name="Butler J."/>
            <person name="Endrizzi M."/>
            <person name="Qui D."/>
            <person name="Ianakiev P."/>
            <person name="Bell-Pedersen D."/>
            <person name="Nelson M.A."/>
            <person name="Werner-Washburne M."/>
            <person name="Selitrennikoff C.P."/>
            <person name="Kinsey J.A."/>
            <person name="Braun E.L."/>
            <person name="Zelter A."/>
            <person name="Schulte U."/>
            <person name="Kothe G.O."/>
            <person name="Jedd G."/>
            <person name="Mewes H.-W."/>
            <person name="Staben C."/>
            <person name="Marcotte E."/>
            <person name="Greenberg D."/>
            <person name="Roy A."/>
            <person name="Foley K."/>
            <person name="Naylor J."/>
            <person name="Stange-Thomann N."/>
            <person name="Barrett R."/>
            <person name="Gnerre S."/>
            <person name="Kamal M."/>
            <person name="Kamvysselis M."/>
            <person name="Mauceli E.W."/>
            <person name="Bielke C."/>
            <person name="Rudd S."/>
            <person name="Frishman D."/>
            <person name="Krystofova S."/>
            <person name="Rasmussen C."/>
            <person name="Metzenberg R.L."/>
            <person name="Perkins D.D."/>
            <person name="Kroken S."/>
            <person name="Cogoni C."/>
            <person name="Macino G."/>
            <person name="Catcheside D.E.A."/>
            <person name="Li W."/>
            <person name="Pratt R.J."/>
            <person name="Osmani S.A."/>
            <person name="DeSouza C.P.C."/>
            <person name="Glass N.L."/>
            <person name="Orbach M.J."/>
            <person name="Berglund J.A."/>
            <person name="Voelker R."/>
            <person name="Yarden O."/>
            <person name="Plamann M."/>
            <person name="Seiler S."/>
            <person name="Dunlap J.C."/>
            <person name="Radford A."/>
            <person name="Aramayo R."/>
            <person name="Natvig D.O."/>
            <person name="Alex L.A."/>
            <person name="Mannhaupt G."/>
            <person name="Ebbole D.J."/>
            <person name="Freitag M."/>
            <person name="Paulsen I."/>
            <person name="Sachs M.S."/>
            <person name="Lander E.S."/>
            <person name="Nusbaum C."/>
            <person name="Birren B.W."/>
        </authorList>
    </citation>
    <scope>NUCLEOTIDE SEQUENCE [LARGE SCALE GENOMIC DNA]</scope>
    <source>
        <strain>ATCC 24698 / 74-OR23-1A / CBS 708.71 / DSM 1257 / FGSC 987</strain>
    </source>
</reference>
<feature type="chain" id="PRO_0000215813" description="Nucleolar GTP-binding protein 2">
    <location>
        <begin position="1"/>
        <end position="619"/>
    </location>
</feature>
<feature type="domain" description="CP-type G" evidence="3">
    <location>
        <begin position="222"/>
        <end position="383"/>
    </location>
</feature>
<feature type="region of interest" description="Disordered" evidence="4">
    <location>
        <begin position="1"/>
        <end position="24"/>
    </location>
</feature>
<feature type="region of interest" description="Disordered" evidence="4">
    <location>
        <begin position="473"/>
        <end position="619"/>
    </location>
</feature>
<feature type="compositionally biased region" description="Basic and acidic residues" evidence="4">
    <location>
        <begin position="1"/>
        <end position="10"/>
    </location>
</feature>
<feature type="compositionally biased region" description="Basic and acidic residues" evidence="4">
    <location>
        <begin position="489"/>
        <end position="500"/>
    </location>
</feature>
<feature type="compositionally biased region" description="Acidic residues" evidence="4">
    <location>
        <begin position="536"/>
        <end position="546"/>
    </location>
</feature>
<feature type="compositionally biased region" description="Basic and acidic residues" evidence="4">
    <location>
        <begin position="547"/>
        <end position="556"/>
    </location>
</feature>
<feature type="compositionally biased region" description="Acidic residues" evidence="4">
    <location>
        <begin position="565"/>
        <end position="603"/>
    </location>
</feature>
<feature type="binding site" evidence="2">
    <location>
        <begin position="332"/>
        <end position="339"/>
    </location>
    <ligand>
        <name>GTP</name>
        <dbReference type="ChEBI" id="CHEBI:37565"/>
    </ligand>
</feature>
<feature type="binding site" evidence="2">
    <location>
        <begin position="376"/>
        <end position="380"/>
    </location>
    <ligand>
        <name>GTP</name>
        <dbReference type="ChEBI" id="CHEBI:37565"/>
    </ligand>
</feature>
<protein>
    <recommendedName>
        <fullName>Nucleolar GTP-binding protein 2</fullName>
    </recommendedName>
</protein>
<accession>Q7SHR8</accession>
<comment type="function">
    <text evidence="1">GTPase that associates with pre-60S ribosomal subunits in the nucleolus and is required for their nuclear export and maturation.</text>
</comment>
<comment type="subcellular location">
    <subcellularLocation>
        <location evidence="1">Nucleus</location>
        <location evidence="1">Nucleolus</location>
    </subcellularLocation>
</comment>
<comment type="similarity">
    <text evidence="3">Belongs to the TRAFAC class YlqF/YawG GTPase family. NOG2 subfamily.</text>
</comment>
<evidence type="ECO:0000250" key="1"/>
<evidence type="ECO:0000255" key="2"/>
<evidence type="ECO:0000255" key="3">
    <source>
        <dbReference type="PROSITE-ProRule" id="PRU01058"/>
    </source>
</evidence>
<evidence type="ECO:0000256" key="4">
    <source>
        <dbReference type="SAM" id="MobiDB-lite"/>
    </source>
</evidence>
<proteinExistence type="inferred from homology"/>
<name>NOG2_NEUCR</name>